<comment type="function">
    <text evidence="1">Protein S19 forms a complex with S13 that binds strongly to the 16S ribosomal RNA.</text>
</comment>
<comment type="similarity">
    <text evidence="1">Belongs to the universal ribosomal protein uS19 family.</text>
</comment>
<protein>
    <recommendedName>
        <fullName evidence="1">Small ribosomal subunit protein uS19</fullName>
    </recommendedName>
    <alternativeName>
        <fullName evidence="3">30S ribosomal protein S19</fullName>
    </alternativeName>
</protein>
<feature type="chain" id="PRO_0000129866" description="Small ribosomal subunit protein uS19">
    <location>
        <begin position="1"/>
        <end position="94"/>
    </location>
</feature>
<feature type="region of interest" description="Disordered" evidence="2">
    <location>
        <begin position="75"/>
        <end position="94"/>
    </location>
</feature>
<feature type="compositionally biased region" description="Basic and acidic residues" evidence="2">
    <location>
        <begin position="83"/>
        <end position="94"/>
    </location>
</feature>
<name>RS19_NITEU</name>
<gene>
    <name evidence="1" type="primary">rpsS</name>
    <name type="ordered locus">NE0405</name>
</gene>
<evidence type="ECO:0000255" key="1">
    <source>
        <dbReference type="HAMAP-Rule" id="MF_00531"/>
    </source>
</evidence>
<evidence type="ECO:0000256" key="2">
    <source>
        <dbReference type="SAM" id="MobiDB-lite"/>
    </source>
</evidence>
<evidence type="ECO:0000305" key="3"/>
<dbReference type="EMBL" id="AL954747">
    <property type="protein sequence ID" value="CAD84316.1"/>
    <property type="molecule type" value="Genomic_DNA"/>
</dbReference>
<dbReference type="RefSeq" id="WP_011111040.1">
    <property type="nucleotide sequence ID" value="NC_004757.1"/>
</dbReference>
<dbReference type="SMR" id="Q82X84"/>
<dbReference type="STRING" id="228410.NE0405"/>
<dbReference type="GeneID" id="87105708"/>
<dbReference type="KEGG" id="neu:NE0405"/>
<dbReference type="eggNOG" id="COG0185">
    <property type="taxonomic scope" value="Bacteria"/>
</dbReference>
<dbReference type="HOGENOM" id="CLU_144911_0_1_4"/>
<dbReference type="OrthoDB" id="9797833at2"/>
<dbReference type="PhylomeDB" id="Q82X84"/>
<dbReference type="Proteomes" id="UP000001416">
    <property type="component" value="Chromosome"/>
</dbReference>
<dbReference type="GO" id="GO:0005737">
    <property type="term" value="C:cytoplasm"/>
    <property type="evidence" value="ECO:0007669"/>
    <property type="project" value="UniProtKB-ARBA"/>
</dbReference>
<dbReference type="GO" id="GO:0015935">
    <property type="term" value="C:small ribosomal subunit"/>
    <property type="evidence" value="ECO:0007669"/>
    <property type="project" value="InterPro"/>
</dbReference>
<dbReference type="GO" id="GO:0019843">
    <property type="term" value="F:rRNA binding"/>
    <property type="evidence" value="ECO:0007669"/>
    <property type="project" value="UniProtKB-UniRule"/>
</dbReference>
<dbReference type="GO" id="GO:0003735">
    <property type="term" value="F:structural constituent of ribosome"/>
    <property type="evidence" value="ECO:0007669"/>
    <property type="project" value="InterPro"/>
</dbReference>
<dbReference type="GO" id="GO:0000028">
    <property type="term" value="P:ribosomal small subunit assembly"/>
    <property type="evidence" value="ECO:0007669"/>
    <property type="project" value="TreeGrafter"/>
</dbReference>
<dbReference type="GO" id="GO:0006412">
    <property type="term" value="P:translation"/>
    <property type="evidence" value="ECO:0007669"/>
    <property type="project" value="UniProtKB-UniRule"/>
</dbReference>
<dbReference type="FunFam" id="3.30.860.10:FF:000001">
    <property type="entry name" value="30S ribosomal protein S19"/>
    <property type="match status" value="1"/>
</dbReference>
<dbReference type="Gene3D" id="3.30.860.10">
    <property type="entry name" value="30s Ribosomal Protein S19, Chain A"/>
    <property type="match status" value="1"/>
</dbReference>
<dbReference type="HAMAP" id="MF_00531">
    <property type="entry name" value="Ribosomal_uS19"/>
    <property type="match status" value="1"/>
</dbReference>
<dbReference type="InterPro" id="IPR002222">
    <property type="entry name" value="Ribosomal_uS19"/>
</dbReference>
<dbReference type="InterPro" id="IPR005732">
    <property type="entry name" value="Ribosomal_uS19_bac-type"/>
</dbReference>
<dbReference type="InterPro" id="IPR020934">
    <property type="entry name" value="Ribosomal_uS19_CS"/>
</dbReference>
<dbReference type="InterPro" id="IPR023575">
    <property type="entry name" value="Ribosomal_uS19_SF"/>
</dbReference>
<dbReference type="NCBIfam" id="TIGR01050">
    <property type="entry name" value="rpsS_bact"/>
    <property type="match status" value="1"/>
</dbReference>
<dbReference type="PANTHER" id="PTHR11880">
    <property type="entry name" value="RIBOSOMAL PROTEIN S19P FAMILY MEMBER"/>
    <property type="match status" value="1"/>
</dbReference>
<dbReference type="PANTHER" id="PTHR11880:SF8">
    <property type="entry name" value="SMALL RIBOSOMAL SUBUNIT PROTEIN US19M"/>
    <property type="match status" value="1"/>
</dbReference>
<dbReference type="Pfam" id="PF00203">
    <property type="entry name" value="Ribosomal_S19"/>
    <property type="match status" value="1"/>
</dbReference>
<dbReference type="PIRSF" id="PIRSF002144">
    <property type="entry name" value="Ribosomal_S19"/>
    <property type="match status" value="1"/>
</dbReference>
<dbReference type="PRINTS" id="PR00975">
    <property type="entry name" value="RIBOSOMALS19"/>
</dbReference>
<dbReference type="SUPFAM" id="SSF54570">
    <property type="entry name" value="Ribosomal protein S19"/>
    <property type="match status" value="1"/>
</dbReference>
<dbReference type="PROSITE" id="PS00323">
    <property type="entry name" value="RIBOSOMAL_S19"/>
    <property type="match status" value="1"/>
</dbReference>
<keyword id="KW-1185">Reference proteome</keyword>
<keyword id="KW-0687">Ribonucleoprotein</keyword>
<keyword id="KW-0689">Ribosomal protein</keyword>
<keyword id="KW-0694">RNA-binding</keyword>
<keyword id="KW-0699">rRNA-binding</keyword>
<reference key="1">
    <citation type="journal article" date="2003" name="J. Bacteriol.">
        <title>Complete genome sequence of the ammonia-oxidizing bacterium and obligate chemolithoautotroph Nitrosomonas europaea.</title>
        <authorList>
            <person name="Chain P."/>
            <person name="Lamerdin J.E."/>
            <person name="Larimer F.W."/>
            <person name="Regala W."/>
            <person name="Lao V."/>
            <person name="Land M.L."/>
            <person name="Hauser L."/>
            <person name="Hooper A.B."/>
            <person name="Klotz M.G."/>
            <person name="Norton J."/>
            <person name="Sayavedra-Soto L.A."/>
            <person name="Arciero D.M."/>
            <person name="Hommes N.G."/>
            <person name="Whittaker M.M."/>
            <person name="Arp D.J."/>
        </authorList>
    </citation>
    <scope>NUCLEOTIDE SEQUENCE [LARGE SCALE GENOMIC DNA]</scope>
    <source>
        <strain>ATCC 19718 / CIP 103999 / KCTC 2705 / NBRC 14298</strain>
    </source>
</reference>
<sequence length="94" mass="10489">MSRSVSKGPFVDLHLVNKVLSARQNNDKKPIKTWSRRSTILPDFIGLTISVHNGRQHVPVFVTENMVGHKLGEFSHTRTFKGHAGDKKAAGSKR</sequence>
<proteinExistence type="inferred from homology"/>
<organism>
    <name type="scientific">Nitrosomonas europaea (strain ATCC 19718 / CIP 103999 / KCTC 2705 / NBRC 14298)</name>
    <dbReference type="NCBI Taxonomy" id="228410"/>
    <lineage>
        <taxon>Bacteria</taxon>
        <taxon>Pseudomonadati</taxon>
        <taxon>Pseudomonadota</taxon>
        <taxon>Betaproteobacteria</taxon>
        <taxon>Nitrosomonadales</taxon>
        <taxon>Nitrosomonadaceae</taxon>
        <taxon>Nitrosomonas</taxon>
    </lineage>
</organism>
<accession>Q82X84</accession>